<keyword id="KW-0963">Cytoplasm</keyword>
<keyword id="KW-0413">Isomerase</keyword>
<keyword id="KW-1185">Reference proteome</keyword>
<keyword id="KW-0677">Repeat</keyword>
<keyword id="KW-0697">Rotamase</keyword>
<keyword id="KW-0802">TPR repeat</keyword>
<name>PPID_EMENI</name>
<organism>
    <name type="scientific">Emericella nidulans (strain FGSC A4 / ATCC 38163 / CBS 112.46 / NRRL 194 / M139)</name>
    <name type="common">Aspergillus nidulans</name>
    <dbReference type="NCBI Taxonomy" id="227321"/>
    <lineage>
        <taxon>Eukaryota</taxon>
        <taxon>Fungi</taxon>
        <taxon>Dikarya</taxon>
        <taxon>Ascomycota</taxon>
        <taxon>Pezizomycotina</taxon>
        <taxon>Eurotiomycetes</taxon>
        <taxon>Eurotiomycetidae</taxon>
        <taxon>Eurotiales</taxon>
        <taxon>Aspergillaceae</taxon>
        <taxon>Aspergillus</taxon>
        <taxon>Aspergillus subgen. Nidulantes</taxon>
    </lineage>
</organism>
<protein>
    <recommendedName>
        <fullName>Peptidyl-prolyl cis-trans isomerase D</fullName>
        <shortName>PPIase D</shortName>
        <ecNumber>5.2.1.8</ecNumber>
    </recommendedName>
    <alternativeName>
        <fullName>Rotamase D</fullName>
    </alternativeName>
</protein>
<comment type="function">
    <text evidence="1">PPIases accelerate the folding of proteins. It catalyzes the cis-trans isomerization of proline imidic peptide bonds in oligopeptides (By similarity).</text>
</comment>
<comment type="catalytic activity">
    <reaction>
        <text>[protein]-peptidylproline (omega=180) = [protein]-peptidylproline (omega=0)</text>
        <dbReference type="Rhea" id="RHEA:16237"/>
        <dbReference type="Rhea" id="RHEA-COMP:10747"/>
        <dbReference type="Rhea" id="RHEA-COMP:10748"/>
        <dbReference type="ChEBI" id="CHEBI:83833"/>
        <dbReference type="ChEBI" id="CHEBI:83834"/>
        <dbReference type="EC" id="5.2.1.8"/>
    </reaction>
</comment>
<comment type="subcellular location">
    <subcellularLocation>
        <location evidence="1">Cytoplasm</location>
    </subcellularLocation>
</comment>
<comment type="similarity">
    <text evidence="4">Belongs to the cyclophilin-type PPIase family. PPIase D subfamily.</text>
</comment>
<reference key="1">
    <citation type="journal article" date="2005" name="Nature">
        <title>Sequencing of Aspergillus nidulans and comparative analysis with A. fumigatus and A. oryzae.</title>
        <authorList>
            <person name="Galagan J.E."/>
            <person name="Calvo S.E."/>
            <person name="Cuomo C."/>
            <person name="Ma L.-J."/>
            <person name="Wortman J.R."/>
            <person name="Batzoglou S."/>
            <person name="Lee S.-I."/>
            <person name="Bastuerkmen M."/>
            <person name="Spevak C.C."/>
            <person name="Clutterbuck J."/>
            <person name="Kapitonov V."/>
            <person name="Jurka J."/>
            <person name="Scazzocchio C."/>
            <person name="Farman M.L."/>
            <person name="Butler J."/>
            <person name="Purcell S."/>
            <person name="Harris S."/>
            <person name="Braus G.H."/>
            <person name="Draht O."/>
            <person name="Busch S."/>
            <person name="D'Enfert C."/>
            <person name="Bouchier C."/>
            <person name="Goldman G.H."/>
            <person name="Bell-Pedersen D."/>
            <person name="Griffiths-Jones S."/>
            <person name="Doonan J.H."/>
            <person name="Yu J."/>
            <person name="Vienken K."/>
            <person name="Pain A."/>
            <person name="Freitag M."/>
            <person name="Selker E.U."/>
            <person name="Archer D.B."/>
            <person name="Penalva M.A."/>
            <person name="Oakley B.R."/>
            <person name="Momany M."/>
            <person name="Tanaka T."/>
            <person name="Kumagai T."/>
            <person name="Asai K."/>
            <person name="Machida M."/>
            <person name="Nierman W.C."/>
            <person name="Denning D.W."/>
            <person name="Caddick M.X."/>
            <person name="Hynes M."/>
            <person name="Paoletti M."/>
            <person name="Fischer R."/>
            <person name="Miller B.L."/>
            <person name="Dyer P.S."/>
            <person name="Sachs M.S."/>
            <person name="Osmani S.A."/>
            <person name="Birren B.W."/>
        </authorList>
    </citation>
    <scope>NUCLEOTIDE SEQUENCE [LARGE SCALE GENOMIC DNA]</scope>
    <source>
        <strain>FGSC A4 / ATCC 38163 / CBS 112.46 / NRRL 194 / M139</strain>
    </source>
</reference>
<reference key="2">
    <citation type="journal article" date="2009" name="Fungal Genet. Biol.">
        <title>The 2008 update of the Aspergillus nidulans genome annotation: a community effort.</title>
        <authorList>
            <person name="Wortman J.R."/>
            <person name="Gilsenan J.M."/>
            <person name="Joardar V."/>
            <person name="Deegan J."/>
            <person name="Clutterbuck J."/>
            <person name="Andersen M.R."/>
            <person name="Archer D."/>
            <person name="Bencina M."/>
            <person name="Braus G."/>
            <person name="Coutinho P."/>
            <person name="von Dohren H."/>
            <person name="Doonan J."/>
            <person name="Driessen A.J."/>
            <person name="Durek P."/>
            <person name="Espeso E."/>
            <person name="Fekete E."/>
            <person name="Flipphi M."/>
            <person name="Estrada C.G."/>
            <person name="Geysens S."/>
            <person name="Goldman G."/>
            <person name="de Groot P.W."/>
            <person name="Hansen K."/>
            <person name="Harris S.D."/>
            <person name="Heinekamp T."/>
            <person name="Helmstaedt K."/>
            <person name="Henrissat B."/>
            <person name="Hofmann G."/>
            <person name="Homan T."/>
            <person name="Horio T."/>
            <person name="Horiuchi H."/>
            <person name="James S."/>
            <person name="Jones M."/>
            <person name="Karaffa L."/>
            <person name="Karanyi Z."/>
            <person name="Kato M."/>
            <person name="Keller N."/>
            <person name="Kelly D.E."/>
            <person name="Kiel J.A."/>
            <person name="Kim J.M."/>
            <person name="van der Klei I.J."/>
            <person name="Klis F.M."/>
            <person name="Kovalchuk A."/>
            <person name="Krasevec N."/>
            <person name="Kubicek C.P."/>
            <person name="Liu B."/>
            <person name="Maccabe A."/>
            <person name="Meyer V."/>
            <person name="Mirabito P."/>
            <person name="Miskei M."/>
            <person name="Mos M."/>
            <person name="Mullins J."/>
            <person name="Nelson D.R."/>
            <person name="Nielsen J."/>
            <person name="Oakley B.R."/>
            <person name="Osmani S.A."/>
            <person name="Pakula T."/>
            <person name="Paszewski A."/>
            <person name="Paulsen I."/>
            <person name="Pilsyk S."/>
            <person name="Pocsi I."/>
            <person name="Punt P.J."/>
            <person name="Ram A.F."/>
            <person name="Ren Q."/>
            <person name="Robellet X."/>
            <person name="Robson G."/>
            <person name="Seiboth B."/>
            <person name="van Solingen P."/>
            <person name="Specht T."/>
            <person name="Sun J."/>
            <person name="Taheri-Talesh N."/>
            <person name="Takeshita N."/>
            <person name="Ussery D."/>
            <person name="vanKuyk P.A."/>
            <person name="Visser H."/>
            <person name="van de Vondervoort P.J."/>
            <person name="de Vries R.P."/>
            <person name="Walton J."/>
            <person name="Xiang X."/>
            <person name="Xiong Y."/>
            <person name="Zeng A.P."/>
            <person name="Brandt B.W."/>
            <person name="Cornell M.J."/>
            <person name="van den Hondel C.A."/>
            <person name="Visser J."/>
            <person name="Oliver S.G."/>
            <person name="Turner G."/>
        </authorList>
    </citation>
    <scope>GENOME REANNOTATION</scope>
    <source>
        <strain>FGSC A4 / ATCC 38163 / CBS 112.46 / NRRL 194 / M139</strain>
    </source>
</reference>
<feature type="chain" id="PRO_0000232948" description="Peptidyl-prolyl cis-trans isomerase D">
    <location>
        <begin position="1"/>
        <end position="372"/>
    </location>
</feature>
<feature type="domain" description="PPIase cyclophilin-type" evidence="2">
    <location>
        <begin position="10"/>
        <end position="173"/>
    </location>
</feature>
<feature type="repeat" description="TPR 1">
    <location>
        <begin position="215"/>
        <end position="248"/>
    </location>
</feature>
<feature type="repeat" description="TPR 2">
    <location>
        <begin position="268"/>
        <end position="304"/>
    </location>
</feature>
<feature type="repeat" description="TPR 3">
    <location>
        <begin position="309"/>
        <end position="342"/>
    </location>
</feature>
<feature type="region of interest" description="Disordered" evidence="3">
    <location>
        <begin position="174"/>
        <end position="193"/>
    </location>
</feature>
<sequence length="372" mass="41065">MAESKRPRVFFDIQIGQQQTGRIAFELFNDVVPKTAENFRALCTGEKGMGKQGKPLHFKGSIFHRVIKQFMIQGGDFTAFNGTGGESIYGEKFPDENFELKHDRPFLLSMANSGPGTNGSQFFITTVPTPHLDGKHVVFGEVINGKSVVRKIENMPTQADKPTTDVTIAECGELTGEDYDNADKQTPDATGDPYEDFPDDHQGEELSAPVCFKIASELKNFGNTAFKNGNIALGLEKYQKGLRYLNEFPEPEENDPKDLEPQMKSLRFTLHSNSSLLANKLGQFKNGKTWATYALDVADAASAKDADRAKVYYRRAVAESGLKEEDEALKDLEQASTLAPSDAAIAAETARVKKAIKAREAQEKATARKFFS</sequence>
<proteinExistence type="inferred from homology"/>
<evidence type="ECO:0000250" key="1"/>
<evidence type="ECO:0000255" key="2">
    <source>
        <dbReference type="PROSITE-ProRule" id="PRU00156"/>
    </source>
</evidence>
<evidence type="ECO:0000256" key="3">
    <source>
        <dbReference type="SAM" id="MobiDB-lite"/>
    </source>
</evidence>
<evidence type="ECO:0000305" key="4"/>
<accession>Q5B4E7</accession>
<accession>C8V7V7</accession>
<dbReference type="EC" id="5.2.1.8"/>
<dbReference type="EMBL" id="AACD01000078">
    <property type="protein sequence ID" value="EAA60926.1"/>
    <property type="molecule type" value="Genomic_DNA"/>
</dbReference>
<dbReference type="EMBL" id="BN001303">
    <property type="protein sequence ID" value="CBF77209.1"/>
    <property type="molecule type" value="Genomic_DNA"/>
</dbReference>
<dbReference type="RefSeq" id="XP_662187.1">
    <property type="nucleotide sequence ID" value="XM_657095.1"/>
</dbReference>
<dbReference type="SMR" id="Q5B4E7"/>
<dbReference type="FunCoup" id="Q5B4E7">
    <property type="interactions" value="1073"/>
</dbReference>
<dbReference type="STRING" id="227321.Q5B4E7"/>
<dbReference type="EnsemblFungi" id="CBF77209">
    <property type="protein sequence ID" value="CBF77209"/>
    <property type="gene ID" value="ANIA_04583"/>
</dbReference>
<dbReference type="KEGG" id="ani:ANIA_04583"/>
<dbReference type="VEuPathDB" id="FungiDB:AN4583"/>
<dbReference type="eggNOG" id="KOG0546">
    <property type="taxonomic scope" value="Eukaryota"/>
</dbReference>
<dbReference type="HOGENOM" id="CLU_012062_37_0_1"/>
<dbReference type="InParanoid" id="Q5B4E7"/>
<dbReference type="OMA" id="EMEQNCN"/>
<dbReference type="OrthoDB" id="193499at2759"/>
<dbReference type="Proteomes" id="UP000000560">
    <property type="component" value="Chromosome III"/>
</dbReference>
<dbReference type="GO" id="GO:0005737">
    <property type="term" value="C:cytoplasm"/>
    <property type="evidence" value="ECO:0000318"/>
    <property type="project" value="GO_Central"/>
</dbReference>
<dbReference type="GO" id="GO:0043231">
    <property type="term" value="C:intracellular membrane-bounded organelle"/>
    <property type="evidence" value="ECO:0000318"/>
    <property type="project" value="GO_Central"/>
</dbReference>
<dbReference type="GO" id="GO:0016018">
    <property type="term" value="F:cyclosporin A binding"/>
    <property type="evidence" value="ECO:0000318"/>
    <property type="project" value="GO_Central"/>
</dbReference>
<dbReference type="GO" id="GO:0003755">
    <property type="term" value="F:peptidyl-prolyl cis-trans isomerase activity"/>
    <property type="evidence" value="ECO:0000318"/>
    <property type="project" value="GO_Central"/>
</dbReference>
<dbReference type="GO" id="GO:0043022">
    <property type="term" value="F:ribosome binding"/>
    <property type="evidence" value="ECO:0007669"/>
    <property type="project" value="EnsemblFungi"/>
</dbReference>
<dbReference type="GO" id="GO:0051082">
    <property type="term" value="F:unfolded protein binding"/>
    <property type="evidence" value="ECO:0007669"/>
    <property type="project" value="EnsemblFungi"/>
</dbReference>
<dbReference type="GO" id="GO:0006457">
    <property type="term" value="P:protein folding"/>
    <property type="evidence" value="ECO:0000318"/>
    <property type="project" value="GO_Central"/>
</dbReference>
<dbReference type="GO" id="GO:0042026">
    <property type="term" value="P:protein refolding"/>
    <property type="evidence" value="ECO:0007669"/>
    <property type="project" value="EnsemblFungi"/>
</dbReference>
<dbReference type="CDD" id="cd01926">
    <property type="entry name" value="cyclophilin_ABH_like"/>
    <property type="match status" value="1"/>
</dbReference>
<dbReference type="FunFam" id="2.40.100.10:FF:000009">
    <property type="entry name" value="Peptidyl-prolyl cis-trans isomerase D"/>
    <property type="match status" value="1"/>
</dbReference>
<dbReference type="FunFam" id="1.25.40.10:FF:000029">
    <property type="entry name" value="peptidyl-prolyl cis-trans isomerase D"/>
    <property type="match status" value="1"/>
</dbReference>
<dbReference type="Gene3D" id="2.40.100.10">
    <property type="entry name" value="Cyclophilin-like"/>
    <property type="match status" value="1"/>
</dbReference>
<dbReference type="Gene3D" id="1.25.40.10">
    <property type="entry name" value="Tetratricopeptide repeat domain"/>
    <property type="match status" value="1"/>
</dbReference>
<dbReference type="InterPro" id="IPR029000">
    <property type="entry name" value="Cyclophilin-like_dom_sf"/>
</dbReference>
<dbReference type="InterPro" id="IPR020892">
    <property type="entry name" value="Cyclophilin-type_PPIase_CS"/>
</dbReference>
<dbReference type="InterPro" id="IPR002130">
    <property type="entry name" value="Cyclophilin-type_PPIase_dom"/>
</dbReference>
<dbReference type="InterPro" id="IPR011990">
    <property type="entry name" value="TPR-like_helical_dom_sf"/>
</dbReference>
<dbReference type="InterPro" id="IPR019734">
    <property type="entry name" value="TPR_rpt"/>
</dbReference>
<dbReference type="PANTHER" id="PTHR11071">
    <property type="entry name" value="PEPTIDYL-PROLYL CIS-TRANS ISOMERASE"/>
    <property type="match status" value="1"/>
</dbReference>
<dbReference type="PANTHER" id="PTHR11071:SF561">
    <property type="entry name" value="PEPTIDYL-PROLYL CIS-TRANS ISOMERASE D-RELATED"/>
    <property type="match status" value="1"/>
</dbReference>
<dbReference type="Pfam" id="PF00160">
    <property type="entry name" value="Pro_isomerase"/>
    <property type="match status" value="1"/>
</dbReference>
<dbReference type="PRINTS" id="PR00153">
    <property type="entry name" value="CSAPPISMRASE"/>
</dbReference>
<dbReference type="SMART" id="SM00028">
    <property type="entry name" value="TPR"/>
    <property type="match status" value="2"/>
</dbReference>
<dbReference type="SUPFAM" id="SSF50891">
    <property type="entry name" value="Cyclophilin-like"/>
    <property type="match status" value="1"/>
</dbReference>
<dbReference type="SUPFAM" id="SSF48452">
    <property type="entry name" value="TPR-like"/>
    <property type="match status" value="1"/>
</dbReference>
<dbReference type="PROSITE" id="PS00170">
    <property type="entry name" value="CSA_PPIASE_1"/>
    <property type="match status" value="1"/>
</dbReference>
<dbReference type="PROSITE" id="PS50072">
    <property type="entry name" value="CSA_PPIASE_2"/>
    <property type="match status" value="1"/>
</dbReference>
<dbReference type="PROSITE" id="PS50005">
    <property type="entry name" value="TPR"/>
    <property type="match status" value="2"/>
</dbReference>
<dbReference type="PROSITE" id="PS50293">
    <property type="entry name" value="TPR_REGION"/>
    <property type="match status" value="1"/>
</dbReference>
<gene>
    <name type="primary">cpr6</name>
    <name type="ORF">AN4583</name>
</gene>